<accession>Q99MB1</accession>
<accession>Q91ZM4</accession>
<dbReference type="EMBL" id="AF420279">
    <property type="protein sequence ID" value="AAL27007.1"/>
    <property type="molecule type" value="mRNA"/>
</dbReference>
<dbReference type="EMBL" id="AF355152">
    <property type="protein sequence ID" value="AAK26117.1"/>
    <property type="molecule type" value="mRNA"/>
</dbReference>
<dbReference type="EMBL" id="AK083977">
    <property type="protein sequence ID" value="BAC39082.1"/>
    <property type="molecule type" value="mRNA"/>
</dbReference>
<dbReference type="CCDS" id="CCDS22278.1"/>
<dbReference type="RefSeq" id="NP_001344245.1">
    <property type="nucleotide sequence ID" value="NM_001357316.1"/>
</dbReference>
<dbReference type="RefSeq" id="NP_001344246.1">
    <property type="nucleotide sequence ID" value="NM_001357317.1"/>
</dbReference>
<dbReference type="RefSeq" id="NP_569054.2">
    <property type="nucleotide sequence ID" value="NM_126166.4"/>
</dbReference>
<dbReference type="RefSeq" id="XP_006509341.1">
    <property type="nucleotide sequence ID" value="XM_006509278.4"/>
</dbReference>
<dbReference type="RefSeq" id="XP_006509342.1">
    <property type="nucleotide sequence ID" value="XM_006509279.3"/>
</dbReference>
<dbReference type="RefSeq" id="XP_006509343.1">
    <property type="nucleotide sequence ID" value="XM_006509280.4"/>
</dbReference>
<dbReference type="RefSeq" id="XP_006509344.1">
    <property type="nucleotide sequence ID" value="XM_006509281.4"/>
</dbReference>
<dbReference type="RefSeq" id="XP_006509345.1">
    <property type="nucleotide sequence ID" value="XM_006509282.3"/>
</dbReference>
<dbReference type="RefSeq" id="XP_006509346.1">
    <property type="nucleotide sequence ID" value="XM_006509283.4"/>
</dbReference>
<dbReference type="PDB" id="3CIG">
    <property type="method" value="X-ray"/>
    <property type="resolution" value="2.66 A"/>
    <property type="chains" value="A=28-704"/>
</dbReference>
<dbReference type="PDB" id="3CIY">
    <property type="method" value="X-ray"/>
    <property type="resolution" value="3.41 A"/>
    <property type="chains" value="A/B=28-704"/>
</dbReference>
<dbReference type="PDB" id="7C77">
    <property type="method" value="EM"/>
    <property type="resolution" value="3.30 A"/>
    <property type="chains" value="A=1-905"/>
</dbReference>
<dbReference type="PDB" id="7DA7">
    <property type="method" value="EM"/>
    <property type="resolution" value="3.47 A"/>
    <property type="chains" value="A/B=28-698"/>
</dbReference>
<dbReference type="PDB" id="7DAS">
    <property type="method" value="EM"/>
    <property type="resolution" value="3.64 A"/>
    <property type="chains" value="A/B=28-698"/>
</dbReference>
<dbReference type="PDB" id="7WM4">
    <property type="method" value="EM"/>
    <property type="resolution" value="3.20 A"/>
    <property type="chains" value="C/D/E/F=26-705"/>
</dbReference>
<dbReference type="PDBsum" id="3CIG"/>
<dbReference type="PDBsum" id="3CIY"/>
<dbReference type="PDBsum" id="7C77"/>
<dbReference type="PDBsum" id="7DA7"/>
<dbReference type="PDBsum" id="7DAS"/>
<dbReference type="PDBsum" id="7WM4"/>
<dbReference type="EMDB" id="EMD-30294"/>
<dbReference type="EMDB" id="EMD-30624"/>
<dbReference type="EMDB" id="EMD-30626"/>
<dbReference type="EMDB" id="EMD-32599"/>
<dbReference type="SMR" id="Q99MB1"/>
<dbReference type="BioGRID" id="228338">
    <property type="interactions" value="13"/>
</dbReference>
<dbReference type="FunCoup" id="Q99MB1">
    <property type="interactions" value="270"/>
</dbReference>
<dbReference type="IntAct" id="Q99MB1">
    <property type="interactions" value="1"/>
</dbReference>
<dbReference type="STRING" id="10090.ENSMUSP00000034056"/>
<dbReference type="ChEMBL" id="CHEMBL2146340"/>
<dbReference type="GlyCosmos" id="Q99MB1">
    <property type="glycosylation" value="15 sites, No reported glycans"/>
</dbReference>
<dbReference type="GlyGen" id="Q99MB1">
    <property type="glycosylation" value="15 sites, 6 N-linked glycans (7 sites)"/>
</dbReference>
<dbReference type="iPTMnet" id="Q99MB1"/>
<dbReference type="PhosphoSitePlus" id="Q99MB1"/>
<dbReference type="PaxDb" id="10090-ENSMUSP00000034056"/>
<dbReference type="ProteomicsDB" id="259207"/>
<dbReference type="ABCD" id="Q99MB1">
    <property type="antibodies" value="10 sequenced antibodies"/>
</dbReference>
<dbReference type="Antibodypedia" id="17502">
    <property type="antibodies" value="1169 antibodies from 47 providers"/>
</dbReference>
<dbReference type="DNASU" id="142980"/>
<dbReference type="Ensembl" id="ENSMUST00000034056.12">
    <property type="protein sequence ID" value="ENSMUSP00000034056.5"/>
    <property type="gene ID" value="ENSMUSG00000031639.13"/>
</dbReference>
<dbReference type="Ensembl" id="ENSMUST00000167106.3">
    <property type="protein sequence ID" value="ENSMUSP00000126556.2"/>
    <property type="gene ID" value="ENSMUSG00000031639.13"/>
</dbReference>
<dbReference type="Ensembl" id="ENSMUST00000209772.2">
    <property type="protein sequence ID" value="ENSMUSP00000147738.2"/>
    <property type="gene ID" value="ENSMUSG00000031639.13"/>
</dbReference>
<dbReference type="GeneID" id="142980"/>
<dbReference type="KEGG" id="mmu:142980"/>
<dbReference type="UCSC" id="uc009loy.1">
    <property type="organism name" value="mouse"/>
</dbReference>
<dbReference type="AGR" id="MGI:2156367"/>
<dbReference type="CTD" id="7098"/>
<dbReference type="MGI" id="MGI:2156367">
    <property type="gene designation" value="Tlr3"/>
</dbReference>
<dbReference type="VEuPathDB" id="HostDB:ENSMUSG00000031639"/>
<dbReference type="eggNOG" id="KOG4641">
    <property type="taxonomic scope" value="Eukaryota"/>
</dbReference>
<dbReference type="GeneTree" id="ENSGT00940000159678"/>
<dbReference type="HOGENOM" id="CLU_006000_4_1_1"/>
<dbReference type="InParanoid" id="Q99MB1"/>
<dbReference type="OMA" id="NWPLHRE"/>
<dbReference type="OrthoDB" id="676979at2759"/>
<dbReference type="PhylomeDB" id="Q99MB1"/>
<dbReference type="TreeFam" id="TF325595"/>
<dbReference type="BioGRID-ORCS" id="142980">
    <property type="hits" value="4 hits in 76 CRISPR screens"/>
</dbReference>
<dbReference type="ChiTaRS" id="Tlr3">
    <property type="organism name" value="mouse"/>
</dbReference>
<dbReference type="EvolutionaryTrace" id="Q99MB1"/>
<dbReference type="PRO" id="PR:Q99MB1"/>
<dbReference type="Proteomes" id="UP000000589">
    <property type="component" value="Chromosome 8"/>
</dbReference>
<dbReference type="RNAct" id="Q99MB1">
    <property type="molecule type" value="protein"/>
</dbReference>
<dbReference type="Bgee" id="ENSMUSG00000031639">
    <property type="expression patterns" value="Expressed in conjunctival fornix and 212 other cell types or tissues"/>
</dbReference>
<dbReference type="ExpressionAtlas" id="Q99MB1">
    <property type="expression patterns" value="baseline and differential"/>
</dbReference>
<dbReference type="GO" id="GO:0009986">
    <property type="term" value="C:cell surface"/>
    <property type="evidence" value="ECO:0007669"/>
    <property type="project" value="Ensembl"/>
</dbReference>
<dbReference type="GO" id="GO:0005769">
    <property type="term" value="C:early endosome"/>
    <property type="evidence" value="ECO:0007669"/>
    <property type="project" value="UniProtKB-SubCell"/>
</dbReference>
<dbReference type="GO" id="GO:0005789">
    <property type="term" value="C:endoplasmic reticulum membrane"/>
    <property type="evidence" value="ECO:0007669"/>
    <property type="project" value="UniProtKB-SubCell"/>
</dbReference>
<dbReference type="GO" id="GO:0010008">
    <property type="term" value="C:endosome membrane"/>
    <property type="evidence" value="ECO:0007669"/>
    <property type="project" value="UniProtKB-SubCell"/>
</dbReference>
<dbReference type="GO" id="GO:0005886">
    <property type="term" value="C:plasma membrane"/>
    <property type="evidence" value="ECO:0000314"/>
    <property type="project" value="UniProt"/>
</dbReference>
<dbReference type="GO" id="GO:0003725">
    <property type="term" value="F:double-stranded RNA binding"/>
    <property type="evidence" value="ECO:0000250"/>
    <property type="project" value="UniProtKB"/>
</dbReference>
<dbReference type="GO" id="GO:0042802">
    <property type="term" value="F:identical protein binding"/>
    <property type="evidence" value="ECO:0007669"/>
    <property type="project" value="Ensembl"/>
</dbReference>
<dbReference type="GO" id="GO:0038187">
    <property type="term" value="F:pattern recognition receptor activity"/>
    <property type="evidence" value="ECO:0000314"/>
    <property type="project" value="MGI"/>
</dbReference>
<dbReference type="GO" id="GO:0004888">
    <property type="term" value="F:transmembrane signaling receptor activity"/>
    <property type="evidence" value="ECO:0000314"/>
    <property type="project" value="UniProt"/>
</dbReference>
<dbReference type="GO" id="GO:0044389">
    <property type="term" value="F:ubiquitin-like protein ligase binding"/>
    <property type="evidence" value="ECO:0000353"/>
    <property type="project" value="MGI"/>
</dbReference>
<dbReference type="GO" id="GO:0071360">
    <property type="term" value="P:cellular response to exogenous dsRNA"/>
    <property type="evidence" value="ECO:0000314"/>
    <property type="project" value="MGI"/>
</dbReference>
<dbReference type="GO" id="GO:0035458">
    <property type="term" value="P:cellular response to interferon-beta"/>
    <property type="evidence" value="ECO:0007669"/>
    <property type="project" value="Ensembl"/>
</dbReference>
<dbReference type="GO" id="GO:0071260">
    <property type="term" value="P:cellular response to mechanical stimulus"/>
    <property type="evidence" value="ECO:0007669"/>
    <property type="project" value="Ensembl"/>
</dbReference>
<dbReference type="GO" id="GO:0071346">
    <property type="term" value="P:cellular response to type II interferon"/>
    <property type="evidence" value="ECO:0007669"/>
    <property type="project" value="Ensembl"/>
</dbReference>
<dbReference type="GO" id="GO:0098586">
    <property type="term" value="P:cellular response to virus"/>
    <property type="evidence" value="ECO:0000315"/>
    <property type="project" value="MGI"/>
</dbReference>
<dbReference type="GO" id="GO:0071466">
    <property type="term" value="P:cellular response to xenobiotic stimulus"/>
    <property type="evidence" value="ECO:0007669"/>
    <property type="project" value="Ensembl"/>
</dbReference>
<dbReference type="GO" id="GO:0006952">
    <property type="term" value="P:defense response"/>
    <property type="evidence" value="ECO:0000315"/>
    <property type="project" value="MGI"/>
</dbReference>
<dbReference type="GO" id="GO:0051607">
    <property type="term" value="P:defense response to virus"/>
    <property type="evidence" value="ECO:0000314"/>
    <property type="project" value="BHF-UCL"/>
</dbReference>
<dbReference type="GO" id="GO:0097191">
    <property type="term" value="P:extrinsic apoptotic signaling pathway"/>
    <property type="evidence" value="ECO:0007669"/>
    <property type="project" value="Ensembl"/>
</dbReference>
<dbReference type="GO" id="GO:0090594">
    <property type="term" value="P:inflammatory response to wounding"/>
    <property type="evidence" value="ECO:0000314"/>
    <property type="project" value="UniProt"/>
</dbReference>
<dbReference type="GO" id="GO:0045087">
    <property type="term" value="P:innate immune response"/>
    <property type="evidence" value="ECO:0000314"/>
    <property type="project" value="BHF-UCL"/>
</dbReference>
<dbReference type="GO" id="GO:0007254">
    <property type="term" value="P:JNK cascade"/>
    <property type="evidence" value="ECO:0000314"/>
    <property type="project" value="MGI"/>
</dbReference>
<dbReference type="GO" id="GO:0008584">
    <property type="term" value="P:male gonad development"/>
    <property type="evidence" value="ECO:0007669"/>
    <property type="project" value="Ensembl"/>
</dbReference>
<dbReference type="GO" id="GO:0000165">
    <property type="term" value="P:MAPK cascade"/>
    <property type="evidence" value="ECO:0000315"/>
    <property type="project" value="MGI"/>
</dbReference>
<dbReference type="GO" id="GO:0001774">
    <property type="term" value="P:microglial cell activation"/>
    <property type="evidence" value="ECO:0007669"/>
    <property type="project" value="Ensembl"/>
</dbReference>
<dbReference type="GO" id="GO:0097527">
    <property type="term" value="P:necroptotic signaling pathway"/>
    <property type="evidence" value="ECO:0007669"/>
    <property type="project" value="Ensembl"/>
</dbReference>
<dbReference type="GO" id="GO:0045766">
    <property type="term" value="P:positive regulation of angiogenesis"/>
    <property type="evidence" value="ECO:0000316"/>
    <property type="project" value="BHF-UCL"/>
</dbReference>
<dbReference type="GO" id="GO:0043065">
    <property type="term" value="P:positive regulation of apoptotic process"/>
    <property type="evidence" value="ECO:0007669"/>
    <property type="project" value="Ensembl"/>
</dbReference>
<dbReference type="GO" id="GO:0043123">
    <property type="term" value="P:positive regulation of canonical NF-kappaB signal transduction"/>
    <property type="evidence" value="ECO:0000314"/>
    <property type="project" value="MGI"/>
</dbReference>
<dbReference type="GO" id="GO:0032722">
    <property type="term" value="P:positive regulation of chemokine production"/>
    <property type="evidence" value="ECO:0000315"/>
    <property type="project" value="MGI"/>
</dbReference>
<dbReference type="GO" id="GO:1900017">
    <property type="term" value="P:positive regulation of cytokine production involved in inflammatory response"/>
    <property type="evidence" value="ECO:0000314"/>
    <property type="project" value="UniProt"/>
</dbReference>
<dbReference type="GO" id="GO:0032727">
    <property type="term" value="P:positive regulation of interferon-alpha production"/>
    <property type="evidence" value="ECO:0000250"/>
    <property type="project" value="UniProtKB"/>
</dbReference>
<dbReference type="GO" id="GO:0032728">
    <property type="term" value="P:positive regulation of interferon-beta production"/>
    <property type="evidence" value="ECO:0000314"/>
    <property type="project" value="BHF-UCL"/>
</dbReference>
<dbReference type="GO" id="GO:0032735">
    <property type="term" value="P:positive regulation of interleukin-12 production"/>
    <property type="evidence" value="ECO:0000314"/>
    <property type="project" value="BHF-UCL"/>
</dbReference>
<dbReference type="GO" id="GO:0032755">
    <property type="term" value="P:positive regulation of interleukin-6 production"/>
    <property type="evidence" value="ECO:0000314"/>
    <property type="project" value="BHF-UCL"/>
</dbReference>
<dbReference type="GO" id="GO:0032757">
    <property type="term" value="P:positive regulation of interleukin-8 production"/>
    <property type="evidence" value="ECO:0007669"/>
    <property type="project" value="Ensembl"/>
</dbReference>
<dbReference type="GO" id="GO:0046330">
    <property type="term" value="P:positive regulation of JNK cascade"/>
    <property type="evidence" value="ECO:0000314"/>
    <property type="project" value="MGI"/>
</dbReference>
<dbReference type="GO" id="GO:0060907">
    <property type="term" value="P:positive regulation of macrophage cytokine production"/>
    <property type="evidence" value="ECO:0000314"/>
    <property type="project" value="MGI"/>
</dbReference>
<dbReference type="GO" id="GO:1901224">
    <property type="term" value="P:positive regulation of non-canonical NF-kappaB signal transduction"/>
    <property type="evidence" value="ECO:0007669"/>
    <property type="project" value="Ensembl"/>
</dbReference>
<dbReference type="GO" id="GO:0045944">
    <property type="term" value="P:positive regulation of transcription by RNA polymerase II"/>
    <property type="evidence" value="ECO:0000314"/>
    <property type="project" value="BHF-UCL"/>
</dbReference>
<dbReference type="GO" id="GO:0032760">
    <property type="term" value="P:positive regulation of tumor necrosis factor production"/>
    <property type="evidence" value="ECO:0000314"/>
    <property type="project" value="BHF-UCL"/>
</dbReference>
<dbReference type="GO" id="GO:0032481">
    <property type="term" value="P:positive regulation of type I interferon production"/>
    <property type="evidence" value="ECO:0000314"/>
    <property type="project" value="MGI"/>
</dbReference>
<dbReference type="GO" id="GO:0032729">
    <property type="term" value="P:positive regulation of type II interferon production"/>
    <property type="evidence" value="ECO:0000250"/>
    <property type="project" value="UniProtKB"/>
</dbReference>
<dbReference type="GO" id="GO:0034346">
    <property type="term" value="P:positive regulation of type III interferon production"/>
    <property type="evidence" value="ECO:0000314"/>
    <property type="project" value="MGI"/>
</dbReference>
<dbReference type="GO" id="GO:0002730">
    <property type="term" value="P:regulation of dendritic cell cytokine production"/>
    <property type="evidence" value="ECO:0000314"/>
    <property type="project" value="MGI"/>
</dbReference>
<dbReference type="GO" id="GO:0043330">
    <property type="term" value="P:response to exogenous dsRNA"/>
    <property type="evidence" value="ECO:0000315"/>
    <property type="project" value="MGI"/>
</dbReference>
<dbReference type="GO" id="GO:0009615">
    <property type="term" value="P:response to virus"/>
    <property type="evidence" value="ECO:0000315"/>
    <property type="project" value="MGI"/>
</dbReference>
<dbReference type="GO" id="GO:0034138">
    <property type="term" value="P:toll-like receptor 3 signaling pathway"/>
    <property type="evidence" value="ECO:0000266"/>
    <property type="project" value="MGI"/>
</dbReference>
<dbReference type="GO" id="GO:0002224">
    <property type="term" value="P:toll-like receptor signaling pathway"/>
    <property type="evidence" value="ECO:0007669"/>
    <property type="project" value="Ensembl"/>
</dbReference>
<dbReference type="GO" id="GO:0034343">
    <property type="term" value="P:type III interferon production"/>
    <property type="evidence" value="ECO:0000314"/>
    <property type="project" value="MGI"/>
</dbReference>
<dbReference type="FunFam" id="3.40.50.10140:FF:000008">
    <property type="entry name" value="Toll-like receptor 3"/>
    <property type="match status" value="1"/>
</dbReference>
<dbReference type="FunFam" id="3.80.10.10:FF:000137">
    <property type="entry name" value="Toll-like receptor 3"/>
    <property type="match status" value="1"/>
</dbReference>
<dbReference type="Gene3D" id="3.80.10.10">
    <property type="entry name" value="Ribonuclease Inhibitor"/>
    <property type="match status" value="1"/>
</dbReference>
<dbReference type="Gene3D" id="3.40.50.10140">
    <property type="entry name" value="Toll/interleukin-1 receptor homology (TIR) domain"/>
    <property type="match status" value="1"/>
</dbReference>
<dbReference type="InterPro" id="IPR000483">
    <property type="entry name" value="Cys-rich_flank_reg_C"/>
</dbReference>
<dbReference type="InterPro" id="IPR001611">
    <property type="entry name" value="Leu-rich_rpt"/>
</dbReference>
<dbReference type="InterPro" id="IPR003591">
    <property type="entry name" value="Leu-rich_rpt_typical-subtyp"/>
</dbReference>
<dbReference type="InterPro" id="IPR032675">
    <property type="entry name" value="LRR_dom_sf"/>
</dbReference>
<dbReference type="InterPro" id="IPR000157">
    <property type="entry name" value="TIR_dom"/>
</dbReference>
<dbReference type="InterPro" id="IPR041015">
    <property type="entry name" value="TLR3_TMD"/>
</dbReference>
<dbReference type="InterPro" id="IPR035897">
    <property type="entry name" value="Toll_tir_struct_dom_sf"/>
</dbReference>
<dbReference type="PANTHER" id="PTHR24365">
    <property type="entry name" value="TOLL-LIKE RECEPTOR"/>
    <property type="match status" value="1"/>
</dbReference>
<dbReference type="PANTHER" id="PTHR24365:SF524">
    <property type="entry name" value="TOLL-LIKE RECEPTOR 3"/>
    <property type="match status" value="1"/>
</dbReference>
<dbReference type="Pfam" id="PF00560">
    <property type="entry name" value="LRR_1"/>
    <property type="match status" value="1"/>
</dbReference>
<dbReference type="Pfam" id="PF13855">
    <property type="entry name" value="LRR_8"/>
    <property type="match status" value="6"/>
</dbReference>
<dbReference type="Pfam" id="PF01582">
    <property type="entry name" value="TIR"/>
    <property type="match status" value="1"/>
</dbReference>
<dbReference type="Pfam" id="PF17968">
    <property type="entry name" value="Tlr3_TMD"/>
    <property type="match status" value="1"/>
</dbReference>
<dbReference type="PRINTS" id="PR00019">
    <property type="entry name" value="LEURICHRPT"/>
</dbReference>
<dbReference type="SMART" id="SM00365">
    <property type="entry name" value="LRR_SD22"/>
    <property type="match status" value="7"/>
</dbReference>
<dbReference type="SMART" id="SM00369">
    <property type="entry name" value="LRR_TYP"/>
    <property type="match status" value="16"/>
</dbReference>
<dbReference type="SMART" id="SM00082">
    <property type="entry name" value="LRRCT"/>
    <property type="match status" value="1"/>
</dbReference>
<dbReference type="SMART" id="SM00255">
    <property type="entry name" value="TIR"/>
    <property type="match status" value="1"/>
</dbReference>
<dbReference type="SUPFAM" id="SSF52058">
    <property type="entry name" value="L domain-like"/>
    <property type="match status" value="2"/>
</dbReference>
<dbReference type="SUPFAM" id="SSF52200">
    <property type="entry name" value="Toll/Interleukin receptor TIR domain"/>
    <property type="match status" value="1"/>
</dbReference>
<dbReference type="PROSITE" id="PS51450">
    <property type="entry name" value="LRR"/>
    <property type="match status" value="18"/>
</dbReference>
<dbReference type="PROSITE" id="PS50104">
    <property type="entry name" value="TIR"/>
    <property type="match status" value="1"/>
</dbReference>
<evidence type="ECO:0000250" key="1"/>
<evidence type="ECO:0000250" key="2">
    <source>
        <dbReference type="UniProtKB" id="O15455"/>
    </source>
</evidence>
<evidence type="ECO:0000255" key="3"/>
<evidence type="ECO:0000255" key="4">
    <source>
        <dbReference type="PROSITE-ProRule" id="PRU00204"/>
    </source>
</evidence>
<evidence type="ECO:0000269" key="5">
    <source>
    </source>
</evidence>
<evidence type="ECO:0000269" key="6">
    <source>
    </source>
</evidence>
<evidence type="ECO:0000269" key="7">
    <source>
    </source>
</evidence>
<evidence type="ECO:0000269" key="8">
    <source>
    </source>
</evidence>
<evidence type="ECO:0000269" key="9">
    <source>
    </source>
</evidence>
<evidence type="ECO:0000305" key="10"/>
<evidence type="ECO:0000312" key="11">
    <source>
        <dbReference type="MGI" id="MGI:2156367"/>
    </source>
</evidence>
<evidence type="ECO:0007744" key="12">
    <source>
        <dbReference type="PDB" id="7C77"/>
    </source>
</evidence>
<evidence type="ECO:0007829" key="13">
    <source>
        <dbReference type="PDB" id="3CIG"/>
    </source>
</evidence>
<evidence type="ECO:0007829" key="14">
    <source>
        <dbReference type="PDB" id="3CIY"/>
    </source>
</evidence>
<evidence type="ECO:0007829" key="15">
    <source>
        <dbReference type="PDB" id="7C77"/>
    </source>
</evidence>
<evidence type="ECO:0007829" key="16">
    <source>
        <dbReference type="PDB" id="7WM4"/>
    </source>
</evidence>
<gene>
    <name evidence="11" type="primary">Tlr3</name>
</gene>
<proteinExistence type="evidence at protein level"/>
<feature type="signal peptide" evidence="3">
    <location>
        <begin position="1"/>
        <end position="25"/>
    </location>
</feature>
<feature type="chain" id="PRO_0000034716" description="Toll-like receptor 3">
    <location>
        <begin position="26"/>
        <end position="905"/>
    </location>
</feature>
<feature type="topological domain" description="Lumenal" evidence="3">
    <location>
        <begin position="26"/>
        <end position="705"/>
    </location>
</feature>
<feature type="transmembrane region" description="Helical" evidence="3">
    <location>
        <begin position="706"/>
        <end position="726"/>
    </location>
</feature>
<feature type="topological domain" description="Cytoplasmic" evidence="3">
    <location>
        <begin position="727"/>
        <end position="905"/>
    </location>
</feature>
<feature type="domain" description="LRRNT">
    <location>
        <begin position="26"/>
        <end position="52"/>
    </location>
</feature>
<feature type="repeat" description="LRR 1">
    <location>
        <begin position="53"/>
        <end position="74"/>
    </location>
</feature>
<feature type="repeat" description="LRR 2">
    <location>
        <begin position="77"/>
        <end position="98"/>
    </location>
</feature>
<feature type="repeat" description="LRR 3">
    <location>
        <begin position="101"/>
        <end position="122"/>
    </location>
</feature>
<feature type="repeat" description="LRR 4">
    <location>
        <begin position="125"/>
        <end position="146"/>
    </location>
</feature>
<feature type="repeat" description="LRR 5">
    <location>
        <begin position="149"/>
        <end position="170"/>
    </location>
</feature>
<feature type="repeat" description="LRR 6">
    <location>
        <begin position="173"/>
        <end position="196"/>
    </location>
</feature>
<feature type="repeat" description="LRR 7">
    <location>
        <begin position="199"/>
        <end position="220"/>
    </location>
</feature>
<feature type="repeat" description="LRR 8">
    <location>
        <begin position="250"/>
        <end position="271"/>
    </location>
</feature>
<feature type="repeat" description="LRR 9">
    <location>
        <begin position="276"/>
        <end position="297"/>
    </location>
</feature>
<feature type="repeat" description="LRR 10">
    <location>
        <begin position="300"/>
        <end position="321"/>
    </location>
</feature>
<feature type="repeat" description="LRR 11">
    <location>
        <begin position="324"/>
        <end position="345"/>
    </location>
</feature>
<feature type="repeat" description="LRR 12">
    <location>
        <begin position="357"/>
        <end position="378"/>
    </location>
</feature>
<feature type="repeat" description="LRR 13">
    <location>
        <begin position="381"/>
        <end position="401"/>
    </location>
</feature>
<feature type="repeat" description="LRR 14">
    <location>
        <begin position="409"/>
        <end position="430"/>
    </location>
</feature>
<feature type="repeat" description="LRR 15">
    <location>
        <begin position="433"/>
        <end position="454"/>
    </location>
</feature>
<feature type="repeat" description="LRR 16">
    <location>
        <begin position="458"/>
        <end position="479"/>
    </location>
</feature>
<feature type="repeat" description="LRR 17">
    <location>
        <begin position="482"/>
        <end position="502"/>
    </location>
</feature>
<feature type="repeat" description="LRR 18">
    <location>
        <begin position="508"/>
        <end position="529"/>
    </location>
</feature>
<feature type="repeat" description="LRR 19">
    <location>
        <begin position="532"/>
        <end position="553"/>
    </location>
</feature>
<feature type="repeat" description="LRR 20">
    <location>
        <begin position="564"/>
        <end position="585"/>
    </location>
</feature>
<feature type="repeat" description="LRR 21">
    <location>
        <begin position="588"/>
        <end position="609"/>
    </location>
</feature>
<feature type="repeat" description="LRR 22">
    <location>
        <begin position="612"/>
        <end position="633"/>
    </location>
</feature>
<feature type="domain" description="LRRCT">
    <location>
        <begin position="646"/>
        <end position="699"/>
    </location>
</feature>
<feature type="domain" description="TIR" evidence="4">
    <location>
        <begin position="755"/>
        <end position="898"/>
    </location>
</feature>
<feature type="modified residue" description="Phosphotyrosine" evidence="2">
    <location>
        <position position="760"/>
    </location>
</feature>
<feature type="modified residue" description="Phosphotyrosine" evidence="2">
    <location>
        <position position="859"/>
    </location>
</feature>
<feature type="glycosylation site" description="N-linked (GlcNAc...) asparagine" evidence="3">
    <location>
        <position position="53"/>
    </location>
</feature>
<feature type="glycosylation site" description="N-linked (GlcNAc...) asparagine" evidence="3">
    <location>
        <position position="58"/>
    </location>
</feature>
<feature type="glycosylation site" description="N-linked (GlcNAc...) asparagine" evidence="6">
    <location>
        <position position="71"/>
    </location>
</feature>
<feature type="glycosylation site" description="N-linked (GlcNAc...) asparagine" evidence="3">
    <location>
        <position position="125"/>
    </location>
</feature>
<feature type="glycosylation site" description="N-linked (GlcNAc...) asparagine" evidence="6">
    <location>
        <position position="197"/>
    </location>
</feature>
<feature type="glycosylation site" description="N-linked (GlcNAc...) asparagine" evidence="3">
    <location>
        <position position="248"/>
    </location>
</feature>
<feature type="glycosylation site" description="N-linked (GlcNAc...) asparagine" evidence="6">
    <location>
        <position position="253"/>
    </location>
</feature>
<feature type="glycosylation site" description="N-linked (GlcNAc...) asparagine" evidence="6">
    <location>
        <position position="276"/>
    </location>
</feature>
<feature type="glycosylation site" description="N-linked (GlcNAc...) asparagine" evidence="6">
    <location>
        <position position="292"/>
    </location>
</feature>
<feature type="glycosylation site" description="N-linked (GlcNAc...) asparagine" evidence="6">
    <location>
        <position position="399"/>
    </location>
</feature>
<feature type="glycosylation site" description="N-linked (GlcNAc...) asparagine" evidence="6">
    <location>
        <position position="414"/>
    </location>
</feature>
<feature type="glycosylation site" description="N-linked (GlcNAc...) asparagine" evidence="6">
    <location>
        <position position="425"/>
    </location>
</feature>
<feature type="glycosylation site" description="N-linked (GlcNAc...) asparagine" evidence="6">
    <location>
        <position position="508"/>
    </location>
</feature>
<feature type="glycosylation site" description="N-linked (GlcNAc...) asparagine" evidence="6">
    <location>
        <position position="663"/>
    </location>
</feature>
<feature type="glycosylation site" description="N-linked (GlcNAc...) asparagine" evidence="6">
    <location>
        <position position="668"/>
    </location>
</feature>
<feature type="disulfide bond" evidence="6">
    <location>
        <begin position="29"/>
        <end position="38"/>
    </location>
</feature>
<feature type="disulfide bond" evidence="6">
    <location>
        <begin position="96"/>
        <end position="123"/>
    </location>
</feature>
<feature type="disulfide bond" evidence="6">
    <location>
        <begin position="650"/>
        <end position="678"/>
    </location>
</feature>
<feature type="disulfide bond" evidence="6">
    <location>
        <begin position="652"/>
        <end position="697"/>
    </location>
</feature>
<feature type="cross-link" description="Glycyl lysine isopeptide (Lys-Gly) (interchain with G-Cter in ubiquitin)" evidence="2">
    <location>
        <position position="766"/>
    </location>
</feature>
<feature type="cross-link" description="Glycyl lysine isopeptide (Lys-Gly) (interchain with G-Cter in ubiquitin)" evidence="2">
    <location>
        <position position="813"/>
    </location>
</feature>
<feature type="cross-link" description="Glycyl lysine isopeptide (Lys-Gly) (interchain with G-Cter in ubiquitin)" evidence="2">
    <location>
        <position position="832"/>
    </location>
</feature>
<feature type="sequence conflict" description="In Ref. 2; AAK26117." evidence="10" ref="2">
    <original>S</original>
    <variation>F</variation>
    <location>
        <position position="670"/>
    </location>
</feature>
<feature type="strand" evidence="16">
    <location>
        <begin position="33"/>
        <end position="35"/>
    </location>
</feature>
<feature type="strand" evidence="16">
    <location>
        <begin position="55"/>
        <end position="58"/>
    </location>
</feature>
<feature type="turn" evidence="13">
    <location>
        <begin position="69"/>
        <end position="72"/>
    </location>
</feature>
<feature type="turn" evidence="13">
    <location>
        <begin position="74"/>
        <end position="77"/>
    </location>
</feature>
<feature type="strand" evidence="13">
    <location>
        <begin position="79"/>
        <end position="82"/>
    </location>
</feature>
<feature type="helix" evidence="13">
    <location>
        <begin position="94"/>
        <end position="98"/>
    </location>
</feature>
<feature type="strand" evidence="13">
    <location>
        <begin position="104"/>
        <end position="106"/>
    </location>
</feature>
<feature type="helix" evidence="16">
    <location>
        <begin position="117"/>
        <end position="120"/>
    </location>
</feature>
<feature type="strand" evidence="13">
    <location>
        <begin position="128"/>
        <end position="130"/>
    </location>
</feature>
<feature type="turn" evidence="13">
    <location>
        <begin position="143"/>
        <end position="146"/>
    </location>
</feature>
<feature type="strand" evidence="13">
    <location>
        <begin position="152"/>
        <end position="154"/>
    </location>
</feature>
<feature type="strand" evidence="13">
    <location>
        <begin position="167"/>
        <end position="169"/>
    </location>
</feature>
<feature type="strand" evidence="13">
    <location>
        <begin position="176"/>
        <end position="178"/>
    </location>
</feature>
<feature type="helix" evidence="13">
    <location>
        <begin position="190"/>
        <end position="195"/>
    </location>
</feature>
<feature type="strand" evidence="13">
    <location>
        <begin position="199"/>
        <end position="204"/>
    </location>
</feature>
<feature type="turn" evidence="13">
    <location>
        <begin position="215"/>
        <end position="220"/>
    </location>
</feature>
<feature type="strand" evidence="13">
    <location>
        <begin position="221"/>
        <end position="224"/>
    </location>
</feature>
<feature type="strand" evidence="13">
    <location>
        <begin position="226"/>
        <end position="228"/>
    </location>
</feature>
<feature type="helix" evidence="13">
    <location>
        <begin position="236"/>
        <end position="246"/>
    </location>
</feature>
<feature type="strand" evidence="13">
    <location>
        <begin position="247"/>
        <end position="249"/>
    </location>
</feature>
<feature type="strand" evidence="13">
    <location>
        <begin position="253"/>
        <end position="255"/>
    </location>
</feature>
<feature type="strand" evidence="14">
    <location>
        <begin position="262"/>
        <end position="264"/>
    </location>
</feature>
<feature type="turn" evidence="13">
    <location>
        <begin position="266"/>
        <end position="269"/>
    </location>
</feature>
<feature type="helix" evidence="13">
    <location>
        <begin position="270"/>
        <end position="272"/>
    </location>
</feature>
<feature type="strand" evidence="13">
    <location>
        <begin position="279"/>
        <end position="281"/>
    </location>
</feature>
<feature type="turn" evidence="13">
    <location>
        <begin position="292"/>
        <end position="297"/>
    </location>
</feature>
<feature type="strand" evidence="13">
    <location>
        <begin position="303"/>
        <end position="305"/>
    </location>
</feature>
<feature type="turn" evidence="13">
    <location>
        <begin position="316"/>
        <end position="321"/>
    </location>
</feature>
<feature type="strand" evidence="13">
    <location>
        <begin position="327"/>
        <end position="329"/>
    </location>
</feature>
<feature type="strand" evidence="13">
    <location>
        <begin position="339"/>
        <end position="341"/>
    </location>
</feature>
<feature type="turn" evidence="13">
    <location>
        <begin position="349"/>
        <end position="354"/>
    </location>
</feature>
<feature type="strand" evidence="13">
    <location>
        <begin position="360"/>
        <end position="362"/>
    </location>
</feature>
<feature type="turn" evidence="14">
    <location>
        <begin position="373"/>
        <end position="378"/>
    </location>
</feature>
<feature type="strand" evidence="13">
    <location>
        <begin position="384"/>
        <end position="386"/>
    </location>
</feature>
<feature type="strand" evidence="13">
    <location>
        <begin position="391"/>
        <end position="393"/>
    </location>
</feature>
<feature type="strand" evidence="16">
    <location>
        <begin position="395"/>
        <end position="397"/>
    </location>
</feature>
<feature type="turn" evidence="13">
    <location>
        <begin position="399"/>
        <end position="402"/>
    </location>
</feature>
<feature type="helix" evidence="13">
    <location>
        <begin position="403"/>
        <end position="405"/>
    </location>
</feature>
<feature type="strand" evidence="13">
    <location>
        <begin position="412"/>
        <end position="414"/>
    </location>
</feature>
<feature type="turn" evidence="13">
    <location>
        <begin position="425"/>
        <end position="430"/>
    </location>
</feature>
<feature type="strand" evidence="13">
    <location>
        <begin position="436"/>
        <end position="438"/>
    </location>
</feature>
<feature type="strand" evidence="13">
    <location>
        <begin position="445"/>
        <end position="447"/>
    </location>
</feature>
<feature type="helix" evidence="16">
    <location>
        <begin position="451"/>
        <end position="453"/>
    </location>
</feature>
<feature type="strand" evidence="13">
    <location>
        <begin position="461"/>
        <end position="463"/>
    </location>
</feature>
<feature type="strand" evidence="13">
    <location>
        <begin position="468"/>
        <end position="471"/>
    </location>
</feature>
<feature type="turn" evidence="13">
    <location>
        <begin position="474"/>
        <end position="479"/>
    </location>
</feature>
<feature type="strand" evidence="13">
    <location>
        <begin position="485"/>
        <end position="487"/>
    </location>
</feature>
<feature type="strand" evidence="13">
    <location>
        <begin position="493"/>
        <end position="495"/>
    </location>
</feature>
<feature type="strand" evidence="16">
    <location>
        <begin position="498"/>
        <end position="500"/>
    </location>
</feature>
<feature type="turn" evidence="13">
    <location>
        <begin position="502"/>
        <end position="505"/>
    </location>
</feature>
<feature type="strand" evidence="13">
    <location>
        <begin position="511"/>
        <end position="513"/>
    </location>
</feature>
<feature type="turn" evidence="13">
    <location>
        <begin position="524"/>
        <end position="529"/>
    </location>
</feature>
<feature type="strand" evidence="13">
    <location>
        <begin position="535"/>
        <end position="537"/>
    </location>
</feature>
<feature type="helix" evidence="15">
    <location>
        <begin position="544"/>
        <end position="547"/>
    </location>
</feature>
<feature type="strand" evidence="15">
    <location>
        <begin position="551"/>
        <end position="554"/>
    </location>
</feature>
<feature type="strand" evidence="13">
    <location>
        <begin position="567"/>
        <end position="569"/>
    </location>
</feature>
<feature type="turn" evidence="13">
    <location>
        <begin position="580"/>
        <end position="585"/>
    </location>
</feature>
<feature type="strand" evidence="13">
    <location>
        <begin position="591"/>
        <end position="593"/>
    </location>
</feature>
<feature type="turn" evidence="13">
    <location>
        <begin position="604"/>
        <end position="609"/>
    </location>
</feature>
<feature type="strand" evidence="13">
    <location>
        <begin position="615"/>
        <end position="617"/>
    </location>
</feature>
<feature type="helix" evidence="13">
    <location>
        <begin position="628"/>
        <end position="635"/>
    </location>
</feature>
<feature type="strand" evidence="13">
    <location>
        <begin position="639"/>
        <end position="642"/>
    </location>
</feature>
<feature type="helix" evidence="13">
    <location>
        <begin position="652"/>
        <end position="664"/>
    </location>
</feature>
<feature type="strand" evidence="15">
    <location>
        <begin position="668"/>
        <end position="671"/>
    </location>
</feature>
<feature type="helix" evidence="13">
    <location>
        <begin position="672"/>
        <end position="675"/>
    </location>
</feature>
<feature type="strand" evidence="13">
    <location>
        <begin position="677"/>
        <end position="681"/>
    </location>
</feature>
<feature type="helix" evidence="13">
    <location>
        <begin position="682"/>
        <end position="684"/>
    </location>
</feature>
<feature type="helix" evidence="13">
    <location>
        <begin position="689"/>
        <end position="691"/>
    </location>
</feature>
<feature type="strand" evidence="15">
    <location>
        <begin position="695"/>
        <end position="697"/>
    </location>
</feature>
<feature type="turn" evidence="15">
    <location>
        <begin position="698"/>
        <end position="700"/>
    </location>
</feature>
<feature type="helix" evidence="15">
    <location>
        <begin position="703"/>
        <end position="726"/>
    </location>
</feature>
<comment type="function">
    <text evidence="1 5">Key component of innate and adaptive immunity. TLRs (Toll-like receptors) control host immune response against pathogens through recognition of molecular patterns specific to microorganisms. TLR3 is a nucleotide-sensing TLR which is activated by double-stranded RNA, a sign of viral infection. Acts via the adapter TRIF/TICAM1, leading to NF-kappa-B activation, IRF3 nuclear translocation, cytokine secretion and the inflammatory response (By similarity).</text>
</comment>
<comment type="subunit">
    <text evidence="2 7 8 9">Monomer and homodimer; dimerization is triggered by ligand-binding, the signaling unit is composed of one ds-RNA of around 40 bp and two TLR3 molecules, and lateral clustering of signaling units along the length of the ds-RNA ligand is required for TLR3 signal transduction. Interacts (via transmembrane domain) with UNC93B1; the interaction is required for transport from the ER to the endosomes (PubMed:33432245). Interacts with SRC; upon binding of double-stranded RNA (By similarity). Interacts with TICAM1 (via the TIR domain) in response to poly(I:C) and this interaction is enhanced in the presence of WDFY1 (PubMed:25736436). The tyrosine-phosphorylated form (via TIR domain) interacts with WDFY1 (via WD repeat 2) in response to poly(I:C) (PubMed:25736436). Ubiquitinated by RNF170 at Lys-766 via 'Lys-48'-linked ubiquitin chains; leading to TLR3 proteasomal degradation (PubMed:31076723).</text>
</comment>
<comment type="subcellular location">
    <subcellularLocation>
        <location>Endoplasmic reticulum membrane</location>
        <topology>Single-pass type I membrane protein</topology>
    </subcellularLocation>
    <subcellularLocation>
        <location evidence="2">Endosome membrane</location>
    </subcellularLocation>
    <subcellularLocation>
        <location evidence="2">Early endosome</location>
    </subcellularLocation>
</comment>
<comment type="tissue specificity">
    <text>Highly expressed in lung. After intraperitoneal injection of lipopolysaccharide, highly expressed in brain, heart, kidney, liver, lung and spleen.</text>
</comment>
<comment type="domain">
    <text>ds-RNA binding is mediated by LRR 1 to 3, and LRR 17 to 18.</text>
</comment>
<comment type="PTM">
    <text evidence="1">TLR3 signaling requires a proteolytic cleavage mediated by cathepsins CTSB and CTSH, the cleavage occurs between amino acids 252 and 346. The cleaved form of TLR3 is the predominant form found in endosomes (By similarity).</text>
</comment>
<comment type="PTM">
    <text evidence="2">Ubiquitinated by TRIM3; leading to recognition and sorting of polyubiquitinated TLR3 by the ESCRT complexes. Ubiquitinated by ZNRF1 via 'Lys-63'-linked ubiquitin chains; leading to TLR3 lysosomal trafficking and degradation.</text>
</comment>
<comment type="similarity">
    <text evidence="10">Belongs to the Toll-like receptor family.</text>
</comment>
<sequence>MKGCSSYLMYSFGGLLSLWILLVSSTNQCTVRYNVADCSHLKLTHIPDDLPSNITVLNLTHNQLRRLPPTNFTRYSQLAILDAGFNSISKLEPELCQILPLLKVLNLQHNELSQISDQTFVFCTNLTELDLMSNSIHKIKSNPFKNQKNLIKLDLSHNGLSSTKLGTGVQLENLQELLLAKNKILALRSEELEFLGNSSLRKLDLSSNPLKEFSPGCFQTIGKLFALLLNNAQLNPHLTEKLCWELSNTSIQNLSLANNQLLATSESTFSGLKWTNLTQLDLSYNNLHDVGNGSFSYLPSLRYLSLEYNNIQRLSPRSFYGLSNLRYLSLKRAFTKQSVSLASHPNIDDFSFQWLKYLEYLNMDDNNIPSTKSNTFTGLVSLKYLSLSKTFTSLQTLTNETFVSLAHSPLLTLNLTKNHISKIANGTFSWLGQLRILDLGLNEIEQKLSGQEWRGLRNIFEIYLSYNKYLQLSTSSFALVPSLQRLMLRRVALKNVDISPSPFRPLRNLTILDLSNNNIANINEDLLEGLENLEILDFQHNNLARLWKRANPGGPVNFLKGLSHLHILNLESNGLDEIPVGVFKNLFELKSINLGLNNLNKLEPFIFDDQTSLRSLNLQKNLITSVEKDVFGPPFQNLNSLDMRFNPFDCTCESISWFVNWINQTHTNISELSTHYLCNTPHHYYGFPLKLFDTSSCKDSAPFELLFIISTSMLLVFILVVLLIHIEGWRISFYWNVSVHRILGFKEIDTQAEQFEYTAYIIHAHKDRDWVWEHFSPMEEQDQSLKFCLEERDFEAGVLGLEAIVNSIKRSRKIIFVITHHLLKDPLCRRFKVHHAVQQAIEQNLDSIILIFLQNIPDYKLNHALCLRRGMFKSHCILNWPVQKERINAFHHKLQVALGSRNSAH</sequence>
<organism>
    <name type="scientific">Mus musculus</name>
    <name type="common">Mouse</name>
    <dbReference type="NCBI Taxonomy" id="10090"/>
    <lineage>
        <taxon>Eukaryota</taxon>
        <taxon>Metazoa</taxon>
        <taxon>Chordata</taxon>
        <taxon>Craniata</taxon>
        <taxon>Vertebrata</taxon>
        <taxon>Euteleostomi</taxon>
        <taxon>Mammalia</taxon>
        <taxon>Eutheria</taxon>
        <taxon>Euarchontoglires</taxon>
        <taxon>Glires</taxon>
        <taxon>Rodentia</taxon>
        <taxon>Myomorpha</taxon>
        <taxon>Muroidea</taxon>
        <taxon>Muridae</taxon>
        <taxon>Murinae</taxon>
        <taxon>Mus</taxon>
        <taxon>Mus</taxon>
    </lineage>
</organism>
<reference key="1">
    <citation type="journal article" date="2001" name="Nature">
        <title>Recognition of double-stranded RNA and activation of NF-kappaB by Toll-like receptor 3.</title>
        <authorList>
            <person name="Alexopoulou L."/>
            <person name="Holt A.C."/>
            <person name="Medzhitov R."/>
            <person name="Flavell R.A."/>
        </authorList>
    </citation>
    <scope>NUCLEOTIDE SEQUENCE [MRNA]</scope>
    <source>
        <strain>129/Sv</strain>
    </source>
</reference>
<reference key="2">
    <citation type="submission" date="2001-02" db="EMBL/GenBank/DDBJ databases">
        <title>Molecular cloning of mouse Toll-like receptor 3 cDNA.</title>
        <authorList>
            <person name="Applequist S.E."/>
            <person name="Ljunggren H.G."/>
        </authorList>
    </citation>
    <scope>NUCLEOTIDE SEQUENCE [MRNA]</scope>
    <source>
        <strain>BALB/c X NIH</strain>
        <tissue>Macrophage</tissue>
    </source>
</reference>
<reference key="3">
    <citation type="journal article" date="2005" name="Science">
        <title>The transcriptional landscape of the mammalian genome.</title>
        <authorList>
            <person name="Carninci P."/>
            <person name="Kasukawa T."/>
            <person name="Katayama S."/>
            <person name="Gough J."/>
            <person name="Frith M.C."/>
            <person name="Maeda N."/>
            <person name="Oyama R."/>
            <person name="Ravasi T."/>
            <person name="Lenhard B."/>
            <person name="Wells C."/>
            <person name="Kodzius R."/>
            <person name="Shimokawa K."/>
            <person name="Bajic V.B."/>
            <person name="Brenner S.E."/>
            <person name="Batalov S."/>
            <person name="Forrest A.R."/>
            <person name="Zavolan M."/>
            <person name="Davis M.J."/>
            <person name="Wilming L.G."/>
            <person name="Aidinis V."/>
            <person name="Allen J.E."/>
            <person name="Ambesi-Impiombato A."/>
            <person name="Apweiler R."/>
            <person name="Aturaliya R.N."/>
            <person name="Bailey T.L."/>
            <person name="Bansal M."/>
            <person name="Baxter L."/>
            <person name="Beisel K.W."/>
            <person name="Bersano T."/>
            <person name="Bono H."/>
            <person name="Chalk A.M."/>
            <person name="Chiu K.P."/>
            <person name="Choudhary V."/>
            <person name="Christoffels A."/>
            <person name="Clutterbuck D.R."/>
            <person name="Crowe M.L."/>
            <person name="Dalla E."/>
            <person name="Dalrymple B.P."/>
            <person name="de Bono B."/>
            <person name="Della Gatta G."/>
            <person name="di Bernardo D."/>
            <person name="Down T."/>
            <person name="Engstrom P."/>
            <person name="Fagiolini M."/>
            <person name="Faulkner G."/>
            <person name="Fletcher C.F."/>
            <person name="Fukushima T."/>
            <person name="Furuno M."/>
            <person name="Futaki S."/>
            <person name="Gariboldi M."/>
            <person name="Georgii-Hemming P."/>
            <person name="Gingeras T.R."/>
            <person name="Gojobori T."/>
            <person name="Green R.E."/>
            <person name="Gustincich S."/>
            <person name="Harbers M."/>
            <person name="Hayashi Y."/>
            <person name="Hensch T.K."/>
            <person name="Hirokawa N."/>
            <person name="Hill D."/>
            <person name="Huminiecki L."/>
            <person name="Iacono M."/>
            <person name="Ikeo K."/>
            <person name="Iwama A."/>
            <person name="Ishikawa T."/>
            <person name="Jakt M."/>
            <person name="Kanapin A."/>
            <person name="Katoh M."/>
            <person name="Kawasawa Y."/>
            <person name="Kelso J."/>
            <person name="Kitamura H."/>
            <person name="Kitano H."/>
            <person name="Kollias G."/>
            <person name="Krishnan S.P."/>
            <person name="Kruger A."/>
            <person name="Kummerfeld S.K."/>
            <person name="Kurochkin I.V."/>
            <person name="Lareau L.F."/>
            <person name="Lazarevic D."/>
            <person name="Lipovich L."/>
            <person name="Liu J."/>
            <person name="Liuni S."/>
            <person name="McWilliam S."/>
            <person name="Madan Babu M."/>
            <person name="Madera M."/>
            <person name="Marchionni L."/>
            <person name="Matsuda H."/>
            <person name="Matsuzawa S."/>
            <person name="Miki H."/>
            <person name="Mignone F."/>
            <person name="Miyake S."/>
            <person name="Morris K."/>
            <person name="Mottagui-Tabar S."/>
            <person name="Mulder N."/>
            <person name="Nakano N."/>
            <person name="Nakauchi H."/>
            <person name="Ng P."/>
            <person name="Nilsson R."/>
            <person name="Nishiguchi S."/>
            <person name="Nishikawa S."/>
            <person name="Nori F."/>
            <person name="Ohara O."/>
            <person name="Okazaki Y."/>
            <person name="Orlando V."/>
            <person name="Pang K.C."/>
            <person name="Pavan W.J."/>
            <person name="Pavesi G."/>
            <person name="Pesole G."/>
            <person name="Petrovsky N."/>
            <person name="Piazza S."/>
            <person name="Reed J."/>
            <person name="Reid J.F."/>
            <person name="Ring B.Z."/>
            <person name="Ringwald M."/>
            <person name="Rost B."/>
            <person name="Ruan Y."/>
            <person name="Salzberg S.L."/>
            <person name="Sandelin A."/>
            <person name="Schneider C."/>
            <person name="Schoenbach C."/>
            <person name="Sekiguchi K."/>
            <person name="Semple C.A."/>
            <person name="Seno S."/>
            <person name="Sessa L."/>
            <person name="Sheng Y."/>
            <person name="Shibata Y."/>
            <person name="Shimada H."/>
            <person name="Shimada K."/>
            <person name="Silva D."/>
            <person name="Sinclair B."/>
            <person name="Sperling S."/>
            <person name="Stupka E."/>
            <person name="Sugiura K."/>
            <person name="Sultana R."/>
            <person name="Takenaka Y."/>
            <person name="Taki K."/>
            <person name="Tammoja K."/>
            <person name="Tan S.L."/>
            <person name="Tang S."/>
            <person name="Taylor M.S."/>
            <person name="Tegner J."/>
            <person name="Teichmann S.A."/>
            <person name="Ueda H.R."/>
            <person name="van Nimwegen E."/>
            <person name="Verardo R."/>
            <person name="Wei C.L."/>
            <person name="Yagi K."/>
            <person name="Yamanishi H."/>
            <person name="Zabarovsky E."/>
            <person name="Zhu S."/>
            <person name="Zimmer A."/>
            <person name="Hide W."/>
            <person name="Bult C."/>
            <person name="Grimmond S.M."/>
            <person name="Teasdale R.D."/>
            <person name="Liu E.T."/>
            <person name="Brusic V."/>
            <person name="Quackenbush J."/>
            <person name="Wahlestedt C."/>
            <person name="Mattick J.S."/>
            <person name="Hume D.A."/>
            <person name="Kai C."/>
            <person name="Sasaki D."/>
            <person name="Tomaru Y."/>
            <person name="Fukuda S."/>
            <person name="Kanamori-Katayama M."/>
            <person name="Suzuki M."/>
            <person name="Aoki J."/>
            <person name="Arakawa T."/>
            <person name="Iida J."/>
            <person name="Imamura K."/>
            <person name="Itoh M."/>
            <person name="Kato T."/>
            <person name="Kawaji H."/>
            <person name="Kawagashira N."/>
            <person name="Kawashima T."/>
            <person name="Kojima M."/>
            <person name="Kondo S."/>
            <person name="Konno H."/>
            <person name="Nakano K."/>
            <person name="Ninomiya N."/>
            <person name="Nishio T."/>
            <person name="Okada M."/>
            <person name="Plessy C."/>
            <person name="Shibata K."/>
            <person name="Shiraki T."/>
            <person name="Suzuki S."/>
            <person name="Tagami M."/>
            <person name="Waki K."/>
            <person name="Watahiki A."/>
            <person name="Okamura-Oho Y."/>
            <person name="Suzuki H."/>
            <person name="Kawai J."/>
            <person name="Hayashizaki Y."/>
        </authorList>
    </citation>
    <scope>NUCLEOTIDE SEQUENCE [LARGE SCALE MRNA]</scope>
    <source>
        <strain>C57BL/6J</strain>
        <tissue>Spinal ganglion</tissue>
    </source>
</reference>
<reference key="4">
    <citation type="journal article" date="2004" name="Proc. Natl. Acad. Sci. U.S.A.">
        <title>Toll-like receptors 9 and 3 as essential components of innate immune defense against mouse cytomegalovirus infection.</title>
        <authorList>
            <person name="Tabeta K."/>
            <person name="Georgel P."/>
            <person name="Janssen E."/>
            <person name="Du X."/>
            <person name="Hoebe K."/>
            <person name="Crozat K."/>
            <person name="Mudd S."/>
            <person name="Shamel L."/>
            <person name="Sovath S."/>
            <person name="Goode J."/>
            <person name="Alexopoulou L."/>
            <person name="Flavell R.A."/>
            <person name="Beutler B."/>
        </authorList>
    </citation>
    <scope>FUNCTION IN CYTOMEGALOVIRUS INFECTION</scope>
</reference>
<reference key="5">
    <citation type="journal article" date="2007" name="J. Cell Biol.">
        <title>The interaction between the ER membrane protein UNC93B and TLR3, 7, and 9 is crucial for TLR signaling.</title>
        <authorList>
            <person name="Brinkmann M.M."/>
            <person name="Spooner E."/>
            <person name="Hoebe K."/>
            <person name="Beutler B."/>
            <person name="Ploegh H.L."/>
            <person name="Kim Y.M."/>
        </authorList>
    </citation>
    <scope>IDENTIFICATION BY MASS SPECTROMETRY</scope>
    <scope>INTERACTION WITH UNC93B1</scope>
</reference>
<reference key="6">
    <citation type="journal article" date="2010" name="Cell">
        <title>A tissue-specific atlas of mouse protein phosphorylation and expression.</title>
        <authorList>
            <person name="Huttlin E.L."/>
            <person name="Jedrychowski M.P."/>
            <person name="Elias J.E."/>
            <person name="Goswami T."/>
            <person name="Rad R."/>
            <person name="Beausoleil S.A."/>
            <person name="Villen J."/>
            <person name="Haas W."/>
            <person name="Sowa M.E."/>
            <person name="Gygi S.P."/>
        </authorList>
    </citation>
    <scope>IDENTIFICATION BY MASS SPECTROMETRY [LARGE SCALE ANALYSIS]</scope>
    <source>
        <tissue>Spleen</tissue>
    </source>
</reference>
<reference key="7">
    <citation type="journal article" date="2015" name="EMBO Rep.">
        <title>WDFY1 mediates TLR3/4 signaling by recruiting TRIF.</title>
        <authorList>
            <person name="Hu Y.H."/>
            <person name="Zhang Y."/>
            <person name="Jiang L.Q."/>
            <person name="Wang S."/>
            <person name="Lei C.Q."/>
            <person name="Sun M.S."/>
            <person name="Shu H.B."/>
            <person name="Liu Y."/>
        </authorList>
    </citation>
    <scope>INTERACTION WITH WDFY1 AND TICAM1</scope>
</reference>
<reference key="8">
    <citation type="journal article" date="2020" name="Cell. Mol. Immunol.">
        <title>E3 ubiquitin ligase RNF170 inhibits innate immune responses by targeting and degrading TLR3 in murine cells.</title>
        <authorList>
            <person name="Song X."/>
            <person name="Liu S."/>
            <person name="Wang W."/>
            <person name="Ma Z."/>
            <person name="Cao X."/>
            <person name="Jiang M."/>
        </authorList>
    </citation>
    <scope>FUNCTION</scope>
    <scope>UBIQUITINATION BY RNF170</scope>
    <scope>MUTAGENESIS OF LYS-766</scope>
</reference>
<reference key="9">
    <citation type="journal article" date="2008" name="Science">
        <title>Structural basis of toll-like receptor 3 signaling with double-stranded RNA.</title>
        <authorList>
            <person name="Liu L."/>
            <person name="Botos I."/>
            <person name="Wang Y."/>
            <person name="Leonard J.N."/>
            <person name="Shiloach J."/>
            <person name="Segal D.M."/>
            <person name="Davies D.R."/>
        </authorList>
    </citation>
    <scope>X-RAY CRYSTALLOGRAPHY (2.66 ANGSTROMS) OF 28-704 IN COMPLEX WITH DS-RNA</scope>
    <scope>SUBUNIT</scope>
    <scope>DISULFIDE BONDS</scope>
    <scope>GLYCOSYLATION AT ASN-71; ASN-197; ASN-253; ASN-276; ASN-292; ASN-399; ASN-414; ASN-425; ASN-508; ASN-663 AND ASN-668</scope>
</reference>
<reference evidence="12" key="10">
    <citation type="journal article" date="2021" name="Nat. Struct. Mol. Biol.">
        <title>Cryo-EM structures of Toll-like receptors in complex with UNC93B1.</title>
        <authorList>
            <person name="Ishida H."/>
            <person name="Asami J."/>
            <person name="Zhang Z."/>
            <person name="Nishizawa T."/>
            <person name="Shigematsu H."/>
            <person name="Ohto U."/>
            <person name="Shimizu T."/>
        </authorList>
    </citation>
    <scope>STRUCTURE BY ELECTRON MICROSCOPY (3.30 ANGSTROMS) IN COMPLEX WITH UNC93B1</scope>
    <scope>INTERACTION WITH UNC93B1</scope>
</reference>
<keyword id="KW-0002">3D-structure</keyword>
<keyword id="KW-1015">Disulfide bond</keyword>
<keyword id="KW-0256">Endoplasmic reticulum</keyword>
<keyword id="KW-0967">Endosome</keyword>
<keyword id="KW-0325">Glycoprotein</keyword>
<keyword id="KW-0391">Immunity</keyword>
<keyword id="KW-0395">Inflammatory response</keyword>
<keyword id="KW-0399">Innate immunity</keyword>
<keyword id="KW-1017">Isopeptide bond</keyword>
<keyword id="KW-0433">Leucine-rich repeat</keyword>
<keyword id="KW-0472">Membrane</keyword>
<keyword id="KW-0597">Phosphoprotein</keyword>
<keyword id="KW-0675">Receptor</keyword>
<keyword id="KW-1185">Reference proteome</keyword>
<keyword id="KW-0677">Repeat</keyword>
<keyword id="KW-0694">RNA-binding</keyword>
<keyword id="KW-0732">Signal</keyword>
<keyword id="KW-0812">Transmembrane</keyword>
<keyword id="KW-1133">Transmembrane helix</keyword>
<keyword id="KW-0832">Ubl conjugation</keyword>
<protein>
    <recommendedName>
        <fullName evidence="10">Toll-like receptor 3</fullName>
    </recommendedName>
    <cdAntigenName>CD283</cdAntigenName>
</protein>
<name>TLR3_MOUSE</name>